<accession>Q2YYV2</accession>
<name>UREG_STAAB</name>
<proteinExistence type="inferred from homology"/>
<evidence type="ECO:0000255" key="1">
    <source>
        <dbReference type="HAMAP-Rule" id="MF_01389"/>
    </source>
</evidence>
<keyword id="KW-0143">Chaperone</keyword>
<keyword id="KW-0963">Cytoplasm</keyword>
<keyword id="KW-0342">GTP-binding</keyword>
<keyword id="KW-0996">Nickel insertion</keyword>
<keyword id="KW-0547">Nucleotide-binding</keyword>
<sequence length="204" mass="22402">MANPIKIGIGGPVGAGKTQLIEKVVKRLSKEMSIGVITNDIYTKEDEKILVNSGVLPESRIIGVETGGCPHTAIREDASMNFAAIDELLERHDDIELIFIESGGDNLAATFSPELVDFSIYIIDVAQGEKIPRKGGQGMIKSDFFVINKTDLAPYVGASLEQMAEDTKVFRDKRPFTFTNLKTDEGLDEVIDWIKRDTLLKGLS</sequence>
<reference key="1">
    <citation type="journal article" date="2007" name="PLoS ONE">
        <title>Molecular correlates of host specialization in Staphylococcus aureus.</title>
        <authorList>
            <person name="Herron-Olson L."/>
            <person name="Fitzgerald J.R."/>
            <person name="Musser J.M."/>
            <person name="Kapur V."/>
        </authorList>
    </citation>
    <scope>NUCLEOTIDE SEQUENCE [LARGE SCALE GENOMIC DNA]</scope>
    <source>
        <strain>bovine RF122 / ET3-1</strain>
    </source>
</reference>
<protein>
    <recommendedName>
        <fullName evidence="1">Urease accessory protein UreG</fullName>
    </recommendedName>
</protein>
<organism>
    <name type="scientific">Staphylococcus aureus (strain bovine RF122 / ET3-1)</name>
    <dbReference type="NCBI Taxonomy" id="273036"/>
    <lineage>
        <taxon>Bacteria</taxon>
        <taxon>Bacillati</taxon>
        <taxon>Bacillota</taxon>
        <taxon>Bacilli</taxon>
        <taxon>Bacillales</taxon>
        <taxon>Staphylococcaceae</taxon>
        <taxon>Staphylococcus</taxon>
    </lineage>
</organism>
<comment type="function">
    <text evidence="1">Facilitates the functional incorporation of the urease nickel metallocenter. This process requires GTP hydrolysis, probably effectuated by UreG.</text>
</comment>
<comment type="subunit">
    <text evidence="1">Homodimer. UreD, UreF and UreG form a complex that acts as a GTP-hydrolysis-dependent molecular chaperone, activating the urease apoprotein by helping to assemble the nickel containing metallocenter of UreC. The UreE protein probably delivers the nickel.</text>
</comment>
<comment type="subcellular location">
    <subcellularLocation>
        <location evidence="1">Cytoplasm</location>
    </subcellularLocation>
</comment>
<comment type="similarity">
    <text evidence="1">Belongs to the SIMIBI class G3E GTPase family. UreG subfamily.</text>
</comment>
<gene>
    <name evidence="1" type="primary">ureG</name>
    <name type="ordered locus">SAB2165</name>
</gene>
<dbReference type="EMBL" id="AJ938182">
    <property type="protein sequence ID" value="CAI81854.1"/>
    <property type="molecule type" value="Genomic_DNA"/>
</dbReference>
<dbReference type="RefSeq" id="WP_000002970.1">
    <property type="nucleotide sequence ID" value="NC_007622.1"/>
</dbReference>
<dbReference type="SMR" id="Q2YYV2"/>
<dbReference type="KEGG" id="sab:SAB2165"/>
<dbReference type="HOGENOM" id="CLU_072144_1_0_9"/>
<dbReference type="GO" id="GO:0005737">
    <property type="term" value="C:cytoplasm"/>
    <property type="evidence" value="ECO:0007669"/>
    <property type="project" value="UniProtKB-SubCell"/>
</dbReference>
<dbReference type="GO" id="GO:0005525">
    <property type="term" value="F:GTP binding"/>
    <property type="evidence" value="ECO:0007669"/>
    <property type="project" value="UniProtKB-KW"/>
</dbReference>
<dbReference type="GO" id="GO:0003924">
    <property type="term" value="F:GTPase activity"/>
    <property type="evidence" value="ECO:0007669"/>
    <property type="project" value="InterPro"/>
</dbReference>
<dbReference type="GO" id="GO:0016151">
    <property type="term" value="F:nickel cation binding"/>
    <property type="evidence" value="ECO:0007669"/>
    <property type="project" value="UniProtKB-UniRule"/>
</dbReference>
<dbReference type="GO" id="GO:0043419">
    <property type="term" value="P:urea catabolic process"/>
    <property type="evidence" value="ECO:0007669"/>
    <property type="project" value="InterPro"/>
</dbReference>
<dbReference type="CDD" id="cd05540">
    <property type="entry name" value="UreG"/>
    <property type="match status" value="1"/>
</dbReference>
<dbReference type="Gene3D" id="3.40.50.300">
    <property type="entry name" value="P-loop containing nucleotide triphosphate hydrolases"/>
    <property type="match status" value="1"/>
</dbReference>
<dbReference type="HAMAP" id="MF_01389">
    <property type="entry name" value="UreG"/>
    <property type="match status" value="1"/>
</dbReference>
<dbReference type="InterPro" id="IPR003495">
    <property type="entry name" value="CobW/HypB/UreG_nucleotide-bd"/>
</dbReference>
<dbReference type="InterPro" id="IPR027417">
    <property type="entry name" value="P-loop_NTPase"/>
</dbReference>
<dbReference type="InterPro" id="IPR004400">
    <property type="entry name" value="UreG"/>
</dbReference>
<dbReference type="NCBIfam" id="TIGR00101">
    <property type="entry name" value="ureG"/>
    <property type="match status" value="1"/>
</dbReference>
<dbReference type="PANTHER" id="PTHR31715">
    <property type="entry name" value="UREASE ACCESSORY PROTEIN G"/>
    <property type="match status" value="1"/>
</dbReference>
<dbReference type="PANTHER" id="PTHR31715:SF0">
    <property type="entry name" value="UREASE ACCESSORY PROTEIN G"/>
    <property type="match status" value="1"/>
</dbReference>
<dbReference type="Pfam" id="PF02492">
    <property type="entry name" value="cobW"/>
    <property type="match status" value="1"/>
</dbReference>
<dbReference type="PIRSF" id="PIRSF005624">
    <property type="entry name" value="Ni-bind_GTPase"/>
    <property type="match status" value="1"/>
</dbReference>
<dbReference type="SUPFAM" id="SSF52540">
    <property type="entry name" value="P-loop containing nucleoside triphosphate hydrolases"/>
    <property type="match status" value="1"/>
</dbReference>
<feature type="chain" id="PRO_1000145227" description="Urease accessory protein UreG">
    <location>
        <begin position="1"/>
        <end position="204"/>
    </location>
</feature>
<feature type="binding site" evidence="1">
    <location>
        <begin position="11"/>
        <end position="18"/>
    </location>
    <ligand>
        <name>GTP</name>
        <dbReference type="ChEBI" id="CHEBI:37565"/>
    </ligand>
</feature>